<keyword id="KW-0687">Ribonucleoprotein</keyword>
<keyword id="KW-0689">Ribosomal protein</keyword>
<keyword id="KW-0694">RNA-binding</keyword>
<keyword id="KW-0699">rRNA-binding</keyword>
<evidence type="ECO:0000255" key="1">
    <source>
        <dbReference type="HAMAP-Rule" id="MF_00500"/>
    </source>
</evidence>
<evidence type="ECO:0000256" key="2">
    <source>
        <dbReference type="SAM" id="MobiDB-lite"/>
    </source>
</evidence>
<evidence type="ECO:0000305" key="3"/>
<gene>
    <name evidence="1" type="primary">rpsT</name>
    <name type="ordered locus">Shewana3_3140</name>
</gene>
<feature type="chain" id="PRO_1000014654" description="Small ribosomal subunit protein bS20">
    <location>
        <begin position="1"/>
        <end position="88"/>
    </location>
</feature>
<feature type="region of interest" description="Disordered" evidence="2">
    <location>
        <begin position="1"/>
        <end position="27"/>
    </location>
</feature>
<name>RS20_SHESA</name>
<protein>
    <recommendedName>
        <fullName evidence="1">Small ribosomal subunit protein bS20</fullName>
    </recommendedName>
    <alternativeName>
        <fullName evidence="3">30S ribosomal protein S20</fullName>
    </alternativeName>
</protein>
<reference key="1">
    <citation type="submission" date="2006-09" db="EMBL/GenBank/DDBJ databases">
        <title>Complete sequence of chromosome 1 of Shewanella sp. ANA-3.</title>
        <authorList>
            <person name="Copeland A."/>
            <person name="Lucas S."/>
            <person name="Lapidus A."/>
            <person name="Barry K."/>
            <person name="Detter J.C."/>
            <person name="Glavina del Rio T."/>
            <person name="Hammon N."/>
            <person name="Israni S."/>
            <person name="Dalin E."/>
            <person name="Tice H."/>
            <person name="Pitluck S."/>
            <person name="Chertkov O."/>
            <person name="Brettin T."/>
            <person name="Bruce D."/>
            <person name="Han C."/>
            <person name="Tapia R."/>
            <person name="Gilna P."/>
            <person name="Schmutz J."/>
            <person name="Larimer F."/>
            <person name="Land M."/>
            <person name="Hauser L."/>
            <person name="Kyrpides N."/>
            <person name="Kim E."/>
            <person name="Newman D."/>
            <person name="Salticov C."/>
            <person name="Konstantinidis K."/>
            <person name="Klappenback J."/>
            <person name="Tiedje J."/>
            <person name="Richardson P."/>
        </authorList>
    </citation>
    <scope>NUCLEOTIDE SEQUENCE [LARGE SCALE GENOMIC DNA]</scope>
    <source>
        <strain>ANA-3</strain>
    </source>
</reference>
<proteinExistence type="inferred from homology"/>
<organism>
    <name type="scientific">Shewanella sp. (strain ANA-3)</name>
    <dbReference type="NCBI Taxonomy" id="94122"/>
    <lineage>
        <taxon>Bacteria</taxon>
        <taxon>Pseudomonadati</taxon>
        <taxon>Pseudomonadota</taxon>
        <taxon>Gammaproteobacteria</taxon>
        <taxon>Alteromonadales</taxon>
        <taxon>Shewanellaceae</taxon>
        <taxon>Shewanella</taxon>
    </lineage>
</organism>
<dbReference type="EMBL" id="CP000469">
    <property type="protein sequence ID" value="ABK49364.1"/>
    <property type="molecule type" value="Genomic_DNA"/>
</dbReference>
<dbReference type="RefSeq" id="WP_011623708.1">
    <property type="nucleotide sequence ID" value="NC_008577.1"/>
</dbReference>
<dbReference type="SMR" id="A0KZZ5"/>
<dbReference type="STRING" id="94122.Shewana3_3140"/>
<dbReference type="GeneID" id="94729060"/>
<dbReference type="KEGG" id="shn:Shewana3_3140"/>
<dbReference type="eggNOG" id="COG0268">
    <property type="taxonomic scope" value="Bacteria"/>
</dbReference>
<dbReference type="HOGENOM" id="CLU_160655_4_0_6"/>
<dbReference type="OrthoDB" id="9807974at2"/>
<dbReference type="Proteomes" id="UP000002589">
    <property type="component" value="Chromosome"/>
</dbReference>
<dbReference type="GO" id="GO:0005829">
    <property type="term" value="C:cytosol"/>
    <property type="evidence" value="ECO:0007669"/>
    <property type="project" value="TreeGrafter"/>
</dbReference>
<dbReference type="GO" id="GO:0015935">
    <property type="term" value="C:small ribosomal subunit"/>
    <property type="evidence" value="ECO:0007669"/>
    <property type="project" value="TreeGrafter"/>
</dbReference>
<dbReference type="GO" id="GO:0070181">
    <property type="term" value="F:small ribosomal subunit rRNA binding"/>
    <property type="evidence" value="ECO:0007669"/>
    <property type="project" value="TreeGrafter"/>
</dbReference>
<dbReference type="GO" id="GO:0003735">
    <property type="term" value="F:structural constituent of ribosome"/>
    <property type="evidence" value="ECO:0007669"/>
    <property type="project" value="InterPro"/>
</dbReference>
<dbReference type="GO" id="GO:0006412">
    <property type="term" value="P:translation"/>
    <property type="evidence" value="ECO:0007669"/>
    <property type="project" value="UniProtKB-UniRule"/>
</dbReference>
<dbReference type="FunFam" id="1.20.58.110:FF:000001">
    <property type="entry name" value="30S ribosomal protein S20"/>
    <property type="match status" value="1"/>
</dbReference>
<dbReference type="Gene3D" id="1.20.58.110">
    <property type="entry name" value="Ribosomal protein S20"/>
    <property type="match status" value="1"/>
</dbReference>
<dbReference type="HAMAP" id="MF_00500">
    <property type="entry name" value="Ribosomal_bS20"/>
    <property type="match status" value="1"/>
</dbReference>
<dbReference type="InterPro" id="IPR002583">
    <property type="entry name" value="Ribosomal_bS20"/>
</dbReference>
<dbReference type="InterPro" id="IPR036510">
    <property type="entry name" value="Ribosomal_bS20_sf"/>
</dbReference>
<dbReference type="NCBIfam" id="TIGR00029">
    <property type="entry name" value="S20"/>
    <property type="match status" value="1"/>
</dbReference>
<dbReference type="PANTHER" id="PTHR33398">
    <property type="entry name" value="30S RIBOSOMAL PROTEIN S20"/>
    <property type="match status" value="1"/>
</dbReference>
<dbReference type="PANTHER" id="PTHR33398:SF1">
    <property type="entry name" value="SMALL RIBOSOMAL SUBUNIT PROTEIN BS20C"/>
    <property type="match status" value="1"/>
</dbReference>
<dbReference type="Pfam" id="PF01649">
    <property type="entry name" value="Ribosomal_S20p"/>
    <property type="match status" value="1"/>
</dbReference>
<dbReference type="SUPFAM" id="SSF46992">
    <property type="entry name" value="Ribosomal protein S20"/>
    <property type="match status" value="1"/>
</dbReference>
<sequence length="88" mass="9701">MANSKSAKKRALQSEKRRQHNASRRSMLRTYVKKVIAAIKAGDHKTATEAFAAAQPIVDRMATKGLIHKNKAARHKARLNAKIKALAA</sequence>
<accession>A0KZZ5</accession>
<comment type="function">
    <text evidence="1">Binds directly to 16S ribosomal RNA.</text>
</comment>
<comment type="similarity">
    <text evidence="1">Belongs to the bacterial ribosomal protein bS20 family.</text>
</comment>